<accession>B8N8Q9</accession>
<reference key="1">
    <citation type="journal article" date="2015" name="Genome Announc.">
        <title>Genome sequence of Aspergillus flavus NRRL 3357, a strain that causes aflatoxin contamination of food and feed.</title>
        <authorList>
            <person name="Nierman W.C."/>
            <person name="Yu J."/>
            <person name="Fedorova-Abrams N.D."/>
            <person name="Losada L."/>
            <person name="Cleveland T.E."/>
            <person name="Bhatnagar D."/>
            <person name="Bennett J.W."/>
            <person name="Dean R."/>
            <person name="Payne G.A."/>
        </authorList>
    </citation>
    <scope>NUCLEOTIDE SEQUENCE [LARGE SCALE GENOMIC DNA]</scope>
    <source>
        <strain>ATCC 200026 / FGSC A1120 / IAM 13836 / NRRL 3357 / JCM 12722 / SRRC 167</strain>
    </source>
</reference>
<reference key="2">
    <citation type="journal article" date="1992" name="J. Nat. Prod.">
        <title>Aflavarin and beta-aflatrem: new anti-insectan metabolites from the sclerotia of Aspergillus flavus.</title>
        <authorList>
            <person name="TePaske M.R."/>
            <person name="Gloer J.B."/>
            <person name="Wicklow D.T."/>
            <person name="Dowd P.F."/>
        </authorList>
    </citation>
    <scope>FUNCTION</scope>
</reference>
<reference key="3">
    <citation type="journal article" date="2015" name="Eukaryot. Cell">
        <title>Transcriptome analysis of Aspergillus flavus reveals veA-dependent regulation of secondary metabolite gene clusters, including the novel aflavarin cluster.</title>
        <authorList>
            <person name="Cary J.W."/>
            <person name="Han Z."/>
            <person name="Yin Y."/>
            <person name="Lohmar J.M."/>
            <person name="Shantappa S."/>
            <person name="Harris-Coward P.Y."/>
            <person name="Mack B."/>
            <person name="Ehrlich K.C."/>
            <person name="Wei Q."/>
            <person name="Arroyo-Manzanares N."/>
            <person name="Uka V."/>
            <person name="Vanhaecke L."/>
            <person name="Bhatnagar D."/>
            <person name="Yu J."/>
            <person name="Nierman W.C."/>
            <person name="Johns M.A."/>
            <person name="Sorensen D."/>
            <person name="Shen H."/>
            <person name="De Saeger S."/>
            <person name="Diana Di Mavungu J."/>
            <person name="Calvo A.M."/>
        </authorList>
    </citation>
    <scope>FUNCTION</scope>
    <scope>DISRUPTION PHENOTYPE</scope>
</reference>
<name>AFVA_ASPFN</name>
<sequence>MTQDIIDNIAAEGISYYTPAQVPPAGTQVEGSTKLFSPLTIRGVTFPNRLFLAPLCQYSAKDGYANDWHLTHIGGIVQRGPGLAIMEATAVQKVGRITPQDLGLYDDGHIEPLKRITEFAHSQSQKIGIQLAHAGRKASAVAPWLSGNAMAVKEVGGWPDDIVAPSAIPQEEGINAVPKVLTGEDIGVLKKDWAEAAKRAVRANFDAIEIHAAHGYLLHQFLSPVSNRRTDKYGGSFENRVRILLEICEEVRAVIPTAMPLLVRISATDWFEFDDNLTKEFPESWTVAQSIRLALLLADRGVDLVDVSSGGIHAKSAIAIRSGPGYQVHFAQEIKKAVGEKLLISAVGGIKTGALAEEVVQSGIDAVQAGRWFQQNPGLVRAFANELGVKVRMATQIDWSFEGRGKKAKKSSL</sequence>
<evidence type="ECO:0000250" key="1">
    <source>
        <dbReference type="UniProtKB" id="P54550"/>
    </source>
</evidence>
<evidence type="ECO:0000269" key="2">
    <source>
    </source>
</evidence>
<evidence type="ECO:0000269" key="3">
    <source ref="2"/>
</evidence>
<evidence type="ECO:0000303" key="4">
    <source>
    </source>
</evidence>
<evidence type="ECO:0000305" key="5"/>
<evidence type="ECO:0000305" key="6">
    <source>
    </source>
</evidence>
<evidence type="ECO:0007829" key="7">
    <source>
        <dbReference type="PDB" id="8J59"/>
    </source>
</evidence>
<keyword id="KW-0002">3D-structure</keyword>
<keyword id="KW-0285">Flavoprotein</keyword>
<keyword id="KW-0288">FMN</keyword>
<keyword id="KW-0521">NADP</keyword>
<keyword id="KW-0560">Oxidoreductase</keyword>
<proteinExistence type="evidence at protein level"/>
<feature type="chain" id="PRO_0000436112" description="NADPH dehydrogenase afvA">
    <location>
        <begin position="1"/>
        <end position="413"/>
    </location>
</feature>
<feature type="binding site" evidence="1">
    <location>
        <begin position="53"/>
        <end position="56"/>
    </location>
    <ligand>
        <name>FMN</name>
        <dbReference type="ChEBI" id="CHEBI:58210"/>
    </ligand>
</feature>
<feature type="binding site" evidence="1">
    <location>
        <position position="58"/>
    </location>
    <ligand>
        <name>substrate</name>
    </ligand>
</feature>
<feature type="binding site" evidence="1">
    <location>
        <position position="88"/>
    </location>
    <ligand>
        <name>FMN</name>
        <dbReference type="ChEBI" id="CHEBI:58210"/>
    </ligand>
</feature>
<feature type="binding site" evidence="1">
    <location>
        <position position="130"/>
    </location>
    <ligand>
        <name>FMN</name>
        <dbReference type="ChEBI" id="CHEBI:58210"/>
    </ligand>
</feature>
<feature type="binding site" evidence="1">
    <location>
        <begin position="211"/>
        <end position="214"/>
    </location>
    <ligand>
        <name>substrate</name>
    </ligand>
</feature>
<feature type="binding site" evidence="1">
    <location>
        <position position="264"/>
    </location>
    <ligand>
        <name>FMN</name>
        <dbReference type="ChEBI" id="CHEBI:58210"/>
    </ligand>
</feature>
<feature type="binding site" evidence="1">
    <location>
        <begin position="370"/>
        <end position="371"/>
    </location>
    <ligand>
        <name>FMN</name>
        <dbReference type="ChEBI" id="CHEBI:58210"/>
    </ligand>
</feature>
<feature type="strand" evidence="7">
    <location>
        <begin position="28"/>
        <end position="30"/>
    </location>
</feature>
<feature type="strand" evidence="7">
    <location>
        <begin position="39"/>
        <end position="41"/>
    </location>
</feature>
<feature type="strand" evidence="7">
    <location>
        <begin position="44"/>
        <end position="47"/>
    </location>
</feature>
<feature type="strand" evidence="7">
    <location>
        <begin position="49"/>
        <end position="52"/>
    </location>
</feature>
<feature type="helix" evidence="7">
    <location>
        <begin position="67"/>
        <end position="77"/>
    </location>
</feature>
<feature type="strand" evidence="7">
    <location>
        <begin position="82"/>
        <end position="92"/>
    </location>
</feature>
<feature type="helix" evidence="7">
    <location>
        <begin position="93"/>
        <end position="95"/>
    </location>
</feature>
<feature type="helix" evidence="7">
    <location>
        <begin position="107"/>
        <end position="109"/>
    </location>
</feature>
<feature type="helix" evidence="7">
    <location>
        <begin position="110"/>
        <end position="122"/>
    </location>
</feature>
<feature type="strand" evidence="7">
    <location>
        <begin position="127"/>
        <end position="132"/>
    </location>
</feature>
<feature type="helix" evidence="7">
    <location>
        <begin position="135"/>
        <end position="137"/>
    </location>
</feature>
<feature type="turn" evidence="7">
    <location>
        <begin position="143"/>
        <end position="145"/>
    </location>
</feature>
<feature type="helix" evidence="7">
    <location>
        <begin position="153"/>
        <end position="155"/>
    </location>
</feature>
<feature type="helix" evidence="7">
    <location>
        <begin position="159"/>
        <end position="161"/>
    </location>
</feature>
<feature type="strand" evidence="7">
    <location>
        <begin position="163"/>
        <end position="167"/>
    </location>
</feature>
<feature type="turn" evidence="7">
    <location>
        <begin position="172"/>
        <end position="174"/>
    </location>
</feature>
<feature type="helix" evidence="7">
    <location>
        <begin position="183"/>
        <end position="202"/>
    </location>
</feature>
<feature type="strand" evidence="7">
    <location>
        <begin position="206"/>
        <end position="212"/>
    </location>
</feature>
<feature type="helix" evidence="7">
    <location>
        <begin position="217"/>
        <end position="222"/>
    </location>
</feature>
<feature type="turn" evidence="7">
    <location>
        <begin position="224"/>
        <end position="226"/>
    </location>
</feature>
<feature type="strand" evidence="7">
    <location>
        <begin position="234"/>
        <end position="236"/>
    </location>
</feature>
<feature type="helix" evidence="7">
    <location>
        <begin position="237"/>
        <end position="252"/>
    </location>
</feature>
<feature type="strand" evidence="7">
    <location>
        <begin position="261"/>
        <end position="266"/>
    </location>
</feature>
<feature type="helix" evidence="7">
    <location>
        <begin position="271"/>
        <end position="273"/>
    </location>
</feature>
<feature type="helix" evidence="7">
    <location>
        <begin position="275"/>
        <end position="280"/>
    </location>
</feature>
<feature type="strand" evidence="7">
    <location>
        <begin position="281"/>
        <end position="283"/>
    </location>
</feature>
<feature type="helix" evidence="7">
    <location>
        <begin position="287"/>
        <end position="299"/>
    </location>
</feature>
<feature type="strand" evidence="7">
    <location>
        <begin position="304"/>
        <end position="308"/>
    </location>
</feature>
<feature type="turn" evidence="7">
    <location>
        <begin position="324"/>
        <end position="327"/>
    </location>
</feature>
<feature type="helix" evidence="7">
    <location>
        <begin position="328"/>
        <end position="338"/>
    </location>
</feature>
<feature type="helix" evidence="7">
    <location>
        <begin position="339"/>
        <end position="341"/>
    </location>
</feature>
<feature type="strand" evidence="7">
    <location>
        <begin position="342"/>
        <end position="349"/>
    </location>
</feature>
<feature type="helix" evidence="7">
    <location>
        <begin position="353"/>
        <end position="361"/>
    </location>
</feature>
<feature type="strand" evidence="7">
    <location>
        <begin position="365"/>
        <end position="370"/>
    </location>
</feature>
<feature type="helix" evidence="7">
    <location>
        <begin position="371"/>
        <end position="375"/>
    </location>
</feature>
<feature type="helix" evidence="7">
    <location>
        <begin position="379"/>
        <end position="386"/>
    </location>
</feature>
<feature type="helix" evidence="7">
    <location>
        <begin position="395"/>
        <end position="399"/>
    </location>
</feature>
<gene>
    <name evidence="4" type="primary">afvA</name>
    <name type="ORF">AFLA_108540</name>
</gene>
<organism>
    <name type="scientific">Aspergillus flavus (strain ATCC 200026 / FGSC A1120 / IAM 13836 / NRRL 3357 / JCM 12722 / SRRC 167)</name>
    <dbReference type="NCBI Taxonomy" id="332952"/>
    <lineage>
        <taxon>Eukaryota</taxon>
        <taxon>Fungi</taxon>
        <taxon>Dikarya</taxon>
        <taxon>Ascomycota</taxon>
        <taxon>Pezizomycotina</taxon>
        <taxon>Eurotiomycetes</taxon>
        <taxon>Eurotiomycetidae</taxon>
        <taxon>Eurotiales</taxon>
        <taxon>Aspergillaceae</taxon>
        <taxon>Aspergillus</taxon>
        <taxon>Aspergillus subgen. Circumdati</taxon>
    </lineage>
</organism>
<protein>
    <recommendedName>
        <fullName evidence="5">NADPH dehydrogenase afvA</fullName>
        <ecNumber evidence="1">1.6.99.1</ecNumber>
    </recommendedName>
    <alternativeName>
        <fullName evidence="4">Aflavarin synthesis protein A</fullName>
    </alternativeName>
</protein>
<comment type="function">
    <text evidence="2 3">NADPH dehydrogenase; part of the gene cluster that mediates the biosynthesis of aflavarin, a bicoumarin that exhibits anti-insectan activity against the fungivorous beetle C.hemipterus (PubMed:26209694, Ref.2).</text>
</comment>
<comment type="catalytic activity">
    <reaction evidence="1">
        <text>A + NADPH + H(+) = AH2 + NADP(+)</text>
        <dbReference type="Rhea" id="RHEA:13149"/>
        <dbReference type="ChEBI" id="CHEBI:13193"/>
        <dbReference type="ChEBI" id="CHEBI:15378"/>
        <dbReference type="ChEBI" id="CHEBI:17499"/>
        <dbReference type="ChEBI" id="CHEBI:57783"/>
        <dbReference type="ChEBI" id="CHEBI:58349"/>
        <dbReference type="EC" id="1.6.99.1"/>
    </reaction>
</comment>
<comment type="cofactor">
    <cofactor evidence="1">
        <name>FMN</name>
        <dbReference type="ChEBI" id="CHEBI:58210"/>
    </cofactor>
</comment>
<comment type="pathway">
    <text evidence="6">Secondary metabolite biosynthesis.</text>
</comment>
<comment type="induction">
    <text evidence="2">Expression is induced by the developmental and secondary metabolism regulator veA (PubMed:26209694).</text>
</comment>
<comment type="disruption phenotype">
    <text evidence="2">Fails to produce aflavarin (PubMed:26209694).</text>
</comment>
<comment type="similarity">
    <text evidence="5">Belongs to the NADH:flavin oxidoreductase/NADH oxidase family. NamA subfamily.</text>
</comment>
<dbReference type="EC" id="1.6.99.1" evidence="1"/>
<dbReference type="EMBL" id="EQ963475">
    <property type="protein sequence ID" value="EED53478.1"/>
    <property type="molecule type" value="Genomic_DNA"/>
</dbReference>
<dbReference type="RefSeq" id="XP_002376724.1">
    <property type="nucleotide sequence ID" value="XM_002376683.1"/>
</dbReference>
<dbReference type="PDB" id="8J59">
    <property type="method" value="X-ray"/>
    <property type="resolution" value="1.55 A"/>
    <property type="chains" value="A/B=13-402"/>
</dbReference>
<dbReference type="PDBsum" id="8J59"/>
<dbReference type="SMR" id="B8N8Q9"/>
<dbReference type="STRING" id="332952.B8N8Q9"/>
<dbReference type="EnsemblFungi" id="EED53478">
    <property type="protein sequence ID" value="EED53478"/>
    <property type="gene ID" value="AFLA_108540"/>
</dbReference>
<dbReference type="VEuPathDB" id="FungiDB:AFLA_006786"/>
<dbReference type="eggNOG" id="KOG0134">
    <property type="taxonomic scope" value="Eukaryota"/>
</dbReference>
<dbReference type="HOGENOM" id="CLU_012153_2_1_1"/>
<dbReference type="OMA" id="DGYANDW"/>
<dbReference type="GO" id="GO:0010181">
    <property type="term" value="F:FMN binding"/>
    <property type="evidence" value="ECO:0007669"/>
    <property type="project" value="InterPro"/>
</dbReference>
<dbReference type="GO" id="GO:0050661">
    <property type="term" value="F:NADP binding"/>
    <property type="evidence" value="ECO:0007669"/>
    <property type="project" value="InterPro"/>
</dbReference>
<dbReference type="GO" id="GO:0003959">
    <property type="term" value="F:NADPH dehydrogenase activity"/>
    <property type="evidence" value="ECO:0007669"/>
    <property type="project" value="UniProtKB-EC"/>
</dbReference>
<dbReference type="CDD" id="cd02932">
    <property type="entry name" value="OYE_YqiM_FMN"/>
    <property type="match status" value="1"/>
</dbReference>
<dbReference type="Gene3D" id="3.20.20.70">
    <property type="entry name" value="Aldolase class I"/>
    <property type="match status" value="1"/>
</dbReference>
<dbReference type="InterPro" id="IPR013785">
    <property type="entry name" value="Aldolase_TIM"/>
</dbReference>
<dbReference type="InterPro" id="IPR001155">
    <property type="entry name" value="OxRdtase_FMN_N"/>
</dbReference>
<dbReference type="InterPro" id="IPR044152">
    <property type="entry name" value="YqjM-like"/>
</dbReference>
<dbReference type="PANTHER" id="PTHR43303">
    <property type="entry name" value="NADPH DEHYDROGENASE C23G7.10C-RELATED"/>
    <property type="match status" value="1"/>
</dbReference>
<dbReference type="PANTHER" id="PTHR43303:SF4">
    <property type="entry name" value="NADPH DEHYDROGENASE C23G7.10C-RELATED"/>
    <property type="match status" value="1"/>
</dbReference>
<dbReference type="Pfam" id="PF00724">
    <property type="entry name" value="Oxidored_FMN"/>
    <property type="match status" value="1"/>
</dbReference>
<dbReference type="SUPFAM" id="SSF51395">
    <property type="entry name" value="FMN-linked oxidoreductases"/>
    <property type="match status" value="1"/>
</dbReference>